<gene>
    <name evidence="1" type="primary">groES</name>
    <name evidence="1" type="synonym">groS</name>
    <name type="ordered locus">Mvan_1494</name>
</gene>
<protein>
    <recommendedName>
        <fullName evidence="1">Co-chaperonin GroES</fullName>
    </recommendedName>
    <alternativeName>
        <fullName evidence="1">10 kDa chaperonin</fullName>
    </alternativeName>
    <alternativeName>
        <fullName evidence="1">Chaperonin-10</fullName>
        <shortName evidence="1">Cpn10</shortName>
    </alternativeName>
</protein>
<name>CH10_MYCVP</name>
<sequence>MASVNIKPLEDKILVQANEAETTTASGLVIPDTAKEKPQEGTVVAVGPGRWDEDGEKRIPLDVSEGDVVIYSKYGGTEIKYNGEEYLILSARDVLAVVSK</sequence>
<keyword id="KW-0143">Chaperone</keyword>
<keyword id="KW-0963">Cytoplasm</keyword>
<proteinExistence type="inferred from homology"/>
<evidence type="ECO:0000255" key="1">
    <source>
        <dbReference type="HAMAP-Rule" id="MF_00580"/>
    </source>
</evidence>
<accession>A1T576</accession>
<dbReference type="EMBL" id="CP000511">
    <property type="protein sequence ID" value="ABM12326.1"/>
    <property type="molecule type" value="Genomic_DNA"/>
</dbReference>
<dbReference type="RefSeq" id="WP_003929249.1">
    <property type="nucleotide sequence ID" value="NZ_JACKSD010000111.1"/>
</dbReference>
<dbReference type="SMR" id="A1T576"/>
<dbReference type="STRING" id="350058.Mvan_1494"/>
<dbReference type="KEGG" id="mva:Mvan_1494"/>
<dbReference type="eggNOG" id="COG0234">
    <property type="taxonomic scope" value="Bacteria"/>
</dbReference>
<dbReference type="HOGENOM" id="CLU_132825_2_0_11"/>
<dbReference type="Proteomes" id="UP000009159">
    <property type="component" value="Chromosome"/>
</dbReference>
<dbReference type="GO" id="GO:0005737">
    <property type="term" value="C:cytoplasm"/>
    <property type="evidence" value="ECO:0007669"/>
    <property type="project" value="UniProtKB-SubCell"/>
</dbReference>
<dbReference type="GO" id="GO:0005524">
    <property type="term" value="F:ATP binding"/>
    <property type="evidence" value="ECO:0007669"/>
    <property type="project" value="InterPro"/>
</dbReference>
<dbReference type="GO" id="GO:0046872">
    <property type="term" value="F:metal ion binding"/>
    <property type="evidence" value="ECO:0007669"/>
    <property type="project" value="TreeGrafter"/>
</dbReference>
<dbReference type="GO" id="GO:0044183">
    <property type="term" value="F:protein folding chaperone"/>
    <property type="evidence" value="ECO:0007669"/>
    <property type="project" value="InterPro"/>
</dbReference>
<dbReference type="GO" id="GO:0051087">
    <property type="term" value="F:protein-folding chaperone binding"/>
    <property type="evidence" value="ECO:0007669"/>
    <property type="project" value="TreeGrafter"/>
</dbReference>
<dbReference type="GO" id="GO:0051082">
    <property type="term" value="F:unfolded protein binding"/>
    <property type="evidence" value="ECO:0007669"/>
    <property type="project" value="TreeGrafter"/>
</dbReference>
<dbReference type="GO" id="GO:0051085">
    <property type="term" value="P:chaperone cofactor-dependent protein refolding"/>
    <property type="evidence" value="ECO:0007669"/>
    <property type="project" value="TreeGrafter"/>
</dbReference>
<dbReference type="CDD" id="cd00320">
    <property type="entry name" value="cpn10"/>
    <property type="match status" value="1"/>
</dbReference>
<dbReference type="FunFam" id="2.30.33.40:FF:000001">
    <property type="entry name" value="10 kDa chaperonin"/>
    <property type="match status" value="1"/>
</dbReference>
<dbReference type="Gene3D" id="2.30.33.40">
    <property type="entry name" value="GroES chaperonin"/>
    <property type="match status" value="1"/>
</dbReference>
<dbReference type="HAMAP" id="MF_00580">
    <property type="entry name" value="CH10"/>
    <property type="match status" value="1"/>
</dbReference>
<dbReference type="InterPro" id="IPR020818">
    <property type="entry name" value="Chaperonin_GroES"/>
</dbReference>
<dbReference type="InterPro" id="IPR037124">
    <property type="entry name" value="Chaperonin_GroES_sf"/>
</dbReference>
<dbReference type="InterPro" id="IPR018369">
    <property type="entry name" value="Chaprnonin_Cpn10_CS"/>
</dbReference>
<dbReference type="InterPro" id="IPR011032">
    <property type="entry name" value="GroES-like_sf"/>
</dbReference>
<dbReference type="NCBIfam" id="NF001530">
    <property type="entry name" value="PRK00364.1-6"/>
    <property type="match status" value="1"/>
</dbReference>
<dbReference type="NCBIfam" id="NF001531">
    <property type="entry name" value="PRK00364.2-2"/>
    <property type="match status" value="1"/>
</dbReference>
<dbReference type="NCBIfam" id="NF001533">
    <property type="entry name" value="PRK00364.2-4"/>
    <property type="match status" value="1"/>
</dbReference>
<dbReference type="NCBIfam" id="NF001534">
    <property type="entry name" value="PRK00364.2-5"/>
    <property type="match status" value="1"/>
</dbReference>
<dbReference type="PANTHER" id="PTHR10772">
    <property type="entry name" value="10 KDA HEAT SHOCK PROTEIN"/>
    <property type="match status" value="1"/>
</dbReference>
<dbReference type="PANTHER" id="PTHR10772:SF58">
    <property type="entry name" value="CO-CHAPERONIN GROES"/>
    <property type="match status" value="1"/>
</dbReference>
<dbReference type="Pfam" id="PF00166">
    <property type="entry name" value="Cpn10"/>
    <property type="match status" value="1"/>
</dbReference>
<dbReference type="PRINTS" id="PR00297">
    <property type="entry name" value="CHAPERONIN10"/>
</dbReference>
<dbReference type="SMART" id="SM00883">
    <property type="entry name" value="Cpn10"/>
    <property type="match status" value="1"/>
</dbReference>
<dbReference type="SUPFAM" id="SSF50129">
    <property type="entry name" value="GroES-like"/>
    <property type="match status" value="1"/>
</dbReference>
<dbReference type="PROSITE" id="PS00681">
    <property type="entry name" value="CHAPERONINS_CPN10"/>
    <property type="match status" value="1"/>
</dbReference>
<organism>
    <name type="scientific">Mycolicibacterium vanbaalenii (strain DSM 7251 / JCM 13017 / BCRC 16820 / KCTC 9966 / NRRL B-24157 / PYR-1)</name>
    <name type="common">Mycobacterium vanbaalenii</name>
    <dbReference type="NCBI Taxonomy" id="350058"/>
    <lineage>
        <taxon>Bacteria</taxon>
        <taxon>Bacillati</taxon>
        <taxon>Actinomycetota</taxon>
        <taxon>Actinomycetes</taxon>
        <taxon>Mycobacteriales</taxon>
        <taxon>Mycobacteriaceae</taxon>
        <taxon>Mycolicibacterium</taxon>
    </lineage>
</organism>
<comment type="function">
    <text evidence="1">Together with the chaperonin GroEL, plays an essential role in assisting protein folding. The GroEL-GroES system forms a nano-cage that allows encapsulation of the non-native substrate proteins and provides a physical environment optimized to promote and accelerate protein folding. GroES binds to the apical surface of the GroEL ring, thereby capping the opening of the GroEL channel.</text>
</comment>
<comment type="subunit">
    <text evidence="1">Heptamer of 7 subunits arranged in a ring. Interacts with the chaperonin GroEL.</text>
</comment>
<comment type="subcellular location">
    <subcellularLocation>
        <location evidence="1">Cytoplasm</location>
    </subcellularLocation>
</comment>
<comment type="similarity">
    <text evidence="1">Belongs to the GroES chaperonin family.</text>
</comment>
<feature type="chain" id="PRO_1000025307" description="Co-chaperonin GroES">
    <location>
        <begin position="1"/>
        <end position="100"/>
    </location>
</feature>
<reference key="1">
    <citation type="submission" date="2006-12" db="EMBL/GenBank/DDBJ databases">
        <title>Complete sequence of Mycobacterium vanbaalenii PYR-1.</title>
        <authorList>
            <consortium name="US DOE Joint Genome Institute"/>
            <person name="Copeland A."/>
            <person name="Lucas S."/>
            <person name="Lapidus A."/>
            <person name="Barry K."/>
            <person name="Detter J.C."/>
            <person name="Glavina del Rio T."/>
            <person name="Hammon N."/>
            <person name="Israni S."/>
            <person name="Dalin E."/>
            <person name="Tice H."/>
            <person name="Pitluck S."/>
            <person name="Singan V."/>
            <person name="Schmutz J."/>
            <person name="Larimer F."/>
            <person name="Land M."/>
            <person name="Hauser L."/>
            <person name="Kyrpides N."/>
            <person name="Anderson I.J."/>
            <person name="Miller C."/>
            <person name="Richardson P."/>
        </authorList>
    </citation>
    <scope>NUCLEOTIDE SEQUENCE [LARGE SCALE GENOMIC DNA]</scope>
    <source>
        <strain>DSM 7251 / JCM 13017 / BCRC 16820 / KCTC 9966 / NRRL B-24157 / PYR-1</strain>
    </source>
</reference>